<feature type="chain" id="PRO_0000239152" description="DEAD-box ATP-dependent RNA helicase 10">
    <location>
        <begin position="1"/>
        <end position="456"/>
    </location>
</feature>
<feature type="domain" description="Helicase ATP-binding" evidence="2">
    <location>
        <begin position="40"/>
        <end position="223"/>
    </location>
</feature>
<feature type="domain" description="Helicase C-terminal" evidence="3">
    <location>
        <begin position="250"/>
        <end position="394"/>
    </location>
</feature>
<feature type="region of interest" description="Disordered" evidence="4">
    <location>
        <begin position="407"/>
        <end position="456"/>
    </location>
</feature>
<feature type="short sequence motif" description="Q motif">
    <location>
        <begin position="9"/>
        <end position="37"/>
    </location>
</feature>
<feature type="short sequence motif" description="DEAD box">
    <location>
        <begin position="171"/>
        <end position="174"/>
    </location>
</feature>
<feature type="compositionally biased region" description="Basic and acidic residues" evidence="4">
    <location>
        <begin position="434"/>
        <end position="448"/>
    </location>
</feature>
<feature type="binding site" evidence="2">
    <location>
        <begin position="53"/>
        <end position="60"/>
    </location>
    <ligand>
        <name>ATP</name>
        <dbReference type="ChEBI" id="CHEBI:30616"/>
    </ligand>
</feature>
<feature type="mutagenesis site" description="In rh10-1; temperature-sensitive mutant." evidence="5">
    <original>T</original>
    <variation>I</variation>
    <location>
        <position position="273"/>
    </location>
</feature>
<feature type="sequence conflict" description="In Ref. 5; AAM65614." evidence="7" ref="5">
    <original>V</original>
    <variation>F</variation>
    <location>
        <position position="124"/>
    </location>
</feature>
<feature type="sequence conflict" description="In Ref. 5; AAM65614." evidence="7" ref="5">
    <original>L</original>
    <variation>R</variation>
    <location>
        <position position="194"/>
    </location>
</feature>
<feature type="sequence conflict" description="In Ref. 3; BAC42444 and 4; AAO63439." evidence="7" ref="3 4">
    <original>K</original>
    <variation>E</variation>
    <location>
        <position position="197"/>
    </location>
</feature>
<organism>
    <name type="scientific">Arabidopsis thaliana</name>
    <name type="common">Mouse-ear cress</name>
    <dbReference type="NCBI Taxonomy" id="3702"/>
    <lineage>
        <taxon>Eukaryota</taxon>
        <taxon>Viridiplantae</taxon>
        <taxon>Streptophyta</taxon>
        <taxon>Embryophyta</taxon>
        <taxon>Tracheophyta</taxon>
        <taxon>Spermatophyta</taxon>
        <taxon>Magnoliopsida</taxon>
        <taxon>eudicotyledons</taxon>
        <taxon>Gunneridae</taxon>
        <taxon>Pentapetalae</taxon>
        <taxon>rosids</taxon>
        <taxon>malvids</taxon>
        <taxon>Brassicales</taxon>
        <taxon>Brassicaceae</taxon>
        <taxon>Camelineae</taxon>
        <taxon>Arabidopsis</taxon>
    </lineage>
</organism>
<reference key="1">
    <citation type="journal article" date="1997" name="DNA Res.">
        <title>Structural analysis of Arabidopsis thaliana chromosome 5. III. Sequence features of the regions of 1,191,918 bp covered by seventeen physically assigned P1 clones.</title>
        <authorList>
            <person name="Nakamura Y."/>
            <person name="Sato S."/>
            <person name="Kaneko T."/>
            <person name="Kotani H."/>
            <person name="Asamizu E."/>
            <person name="Miyajima N."/>
            <person name="Tabata S."/>
        </authorList>
    </citation>
    <scope>NUCLEOTIDE SEQUENCE [LARGE SCALE GENOMIC DNA]</scope>
    <source>
        <strain>cv. Columbia</strain>
    </source>
</reference>
<reference key="2">
    <citation type="journal article" date="2017" name="Plant J.">
        <title>Araport11: a complete reannotation of the Arabidopsis thaliana reference genome.</title>
        <authorList>
            <person name="Cheng C.Y."/>
            <person name="Krishnakumar V."/>
            <person name="Chan A.P."/>
            <person name="Thibaud-Nissen F."/>
            <person name="Schobel S."/>
            <person name="Town C.D."/>
        </authorList>
    </citation>
    <scope>GENOME REANNOTATION</scope>
    <source>
        <strain>cv. Columbia</strain>
    </source>
</reference>
<reference key="3">
    <citation type="journal article" date="2002" name="Science">
        <title>Functional annotation of a full-length Arabidopsis cDNA collection.</title>
        <authorList>
            <person name="Seki M."/>
            <person name="Narusaka M."/>
            <person name="Kamiya A."/>
            <person name="Ishida J."/>
            <person name="Satou M."/>
            <person name="Sakurai T."/>
            <person name="Nakajima M."/>
            <person name="Enju A."/>
            <person name="Akiyama K."/>
            <person name="Oono Y."/>
            <person name="Muramatsu M."/>
            <person name="Hayashizaki Y."/>
            <person name="Kawai J."/>
            <person name="Carninci P."/>
            <person name="Itoh M."/>
            <person name="Ishii Y."/>
            <person name="Arakawa T."/>
            <person name="Shibata K."/>
            <person name="Shinagawa A."/>
            <person name="Shinozaki K."/>
        </authorList>
    </citation>
    <scope>NUCLEOTIDE SEQUENCE [LARGE SCALE MRNA]</scope>
    <source>
        <strain>cv. Columbia</strain>
    </source>
</reference>
<reference key="4">
    <citation type="journal article" date="2003" name="Science">
        <title>Empirical analysis of transcriptional activity in the Arabidopsis genome.</title>
        <authorList>
            <person name="Yamada K."/>
            <person name="Lim J."/>
            <person name="Dale J.M."/>
            <person name="Chen H."/>
            <person name="Shinn P."/>
            <person name="Palm C.J."/>
            <person name="Southwick A.M."/>
            <person name="Wu H.C."/>
            <person name="Kim C.J."/>
            <person name="Nguyen M."/>
            <person name="Pham P.K."/>
            <person name="Cheuk R.F."/>
            <person name="Karlin-Newmann G."/>
            <person name="Liu S.X."/>
            <person name="Lam B."/>
            <person name="Sakano H."/>
            <person name="Wu T."/>
            <person name="Yu G."/>
            <person name="Miranda M."/>
            <person name="Quach H.L."/>
            <person name="Tripp M."/>
            <person name="Chang C.H."/>
            <person name="Lee J.M."/>
            <person name="Toriumi M.J."/>
            <person name="Chan M.M."/>
            <person name="Tang C.C."/>
            <person name="Onodera C.S."/>
            <person name="Deng J.M."/>
            <person name="Akiyama K."/>
            <person name="Ansari Y."/>
            <person name="Arakawa T."/>
            <person name="Banh J."/>
            <person name="Banno F."/>
            <person name="Bowser L."/>
            <person name="Brooks S.Y."/>
            <person name="Carninci P."/>
            <person name="Chao Q."/>
            <person name="Choy N."/>
            <person name="Enju A."/>
            <person name="Goldsmith A.D."/>
            <person name="Gurjal M."/>
            <person name="Hansen N.F."/>
            <person name="Hayashizaki Y."/>
            <person name="Johnson-Hopson C."/>
            <person name="Hsuan V.W."/>
            <person name="Iida K."/>
            <person name="Karnes M."/>
            <person name="Khan S."/>
            <person name="Koesema E."/>
            <person name="Ishida J."/>
            <person name="Jiang P.X."/>
            <person name="Jones T."/>
            <person name="Kawai J."/>
            <person name="Kamiya A."/>
            <person name="Meyers C."/>
            <person name="Nakajima M."/>
            <person name="Narusaka M."/>
            <person name="Seki M."/>
            <person name="Sakurai T."/>
            <person name="Satou M."/>
            <person name="Tamse R."/>
            <person name="Vaysberg M."/>
            <person name="Wallender E.K."/>
            <person name="Wong C."/>
            <person name="Yamamura Y."/>
            <person name="Yuan S."/>
            <person name="Shinozaki K."/>
            <person name="Davis R.W."/>
            <person name="Theologis A."/>
            <person name="Ecker J.R."/>
        </authorList>
    </citation>
    <scope>NUCLEOTIDE SEQUENCE [LARGE SCALE MRNA]</scope>
    <source>
        <strain>cv. Columbia</strain>
    </source>
</reference>
<reference key="5">
    <citation type="submission" date="2002-03" db="EMBL/GenBank/DDBJ databases">
        <title>Full-length cDNA from Arabidopsis thaliana.</title>
        <authorList>
            <person name="Brover V.V."/>
            <person name="Troukhan M.E."/>
            <person name="Alexandrov N.A."/>
            <person name="Lu Y.-P."/>
            <person name="Flavell R.B."/>
            <person name="Feldmann K.A."/>
        </authorList>
    </citation>
    <scope>NUCLEOTIDE SEQUENCE [LARGE SCALE MRNA]</scope>
</reference>
<reference key="6">
    <citation type="journal article" date="1999" name="Nucleic Acids Res.">
        <title>The DEAD box RNA helicase family in Arabidopsis thaliana.</title>
        <authorList>
            <person name="Aubourg S."/>
            <person name="Kreis M."/>
            <person name="Lecharny A."/>
        </authorList>
    </citation>
    <scope>NUCLEOTIDE SEQUENCE [MRNA] OF 81-456</scope>
    <source>
        <strain>cv. Columbia</strain>
    </source>
</reference>
<reference key="7">
    <citation type="journal article" date="2004" name="Plant Biotechnol. J.">
        <title>DEAD-box RNA helicases in Arabidopsis thaliana: establishing a link between quantitative expression, gene structure and evolution of a family of genes.</title>
        <authorList>
            <person name="Mingam A."/>
            <person name="Toffano-Nioche C."/>
            <person name="Brunaud V."/>
            <person name="Boudet N."/>
            <person name="Kreis M."/>
            <person name="Lecharny A."/>
        </authorList>
    </citation>
    <scope>GENE FAMILY</scope>
    <scope>NOMENCLATURE</scope>
</reference>
<reference key="8">
    <citation type="journal article" date="2013" name="PLoS ONE">
        <title>Genome-wide comparative in silico analysis of the RNA helicase gene family in Zea mays and Glycine max: a comparison with Arabidopsis and Oryza sativa.</title>
        <authorList>
            <person name="Xu R."/>
            <person name="Zhang S."/>
            <person name="Huang J."/>
            <person name="Zheng C."/>
        </authorList>
    </citation>
    <scope>GENE FAMILY</scope>
</reference>
<reference key="9">
    <citation type="journal article" date="2016" name="Biol. Open">
        <title>A genetic link between epigenetic repressor AS1-AS2 and a putative small subunit processome in leaf polarity establishment of Arabidopsis.</title>
        <authorList>
            <person name="Matsumura Y."/>
            <person name="Ohbayashi I."/>
            <person name="Takahashi H."/>
            <person name="Kojima S."/>
            <person name="Ishibashi N."/>
            <person name="Keta S."/>
            <person name="Nakagawa A."/>
            <person name="Hayashi R."/>
            <person name="Saez-Vasquez J."/>
            <person name="Echeverria M."/>
            <person name="Sugiyama M."/>
            <person name="Nakamura K."/>
            <person name="Machida C."/>
            <person name="Machida Y."/>
        </authorList>
    </citation>
    <scope>FUNCTION</scope>
    <scope>SUBCELLULAR LOCATION</scope>
    <scope>TISSUE SPECIFICITY</scope>
    <scope>DISRUPTION PHENOTYPE</scope>
    <scope>MUTAGENESIS OF THR-273</scope>
    <source>
        <strain evidence="6">cv. Columbia</strain>
        <strain evidence="6">cv. Landsberg erecta</strain>
    </source>
</reference>
<dbReference type="EC" id="3.6.4.13" evidence="1"/>
<dbReference type="EMBL" id="AB008269">
    <property type="protein sequence ID" value="BAB10648.1"/>
    <property type="molecule type" value="Genomic_DNA"/>
</dbReference>
<dbReference type="EMBL" id="CP002688">
    <property type="protein sequence ID" value="AED97408.1"/>
    <property type="molecule type" value="Genomic_DNA"/>
</dbReference>
<dbReference type="EMBL" id="AK117799">
    <property type="protein sequence ID" value="BAC42444.1"/>
    <property type="molecule type" value="mRNA"/>
</dbReference>
<dbReference type="EMBL" id="BT005375">
    <property type="protein sequence ID" value="AAO63439.1"/>
    <property type="molecule type" value="mRNA"/>
</dbReference>
<dbReference type="EMBL" id="AY088068">
    <property type="protein sequence ID" value="AAM65614.1"/>
    <property type="molecule type" value="mRNA"/>
</dbReference>
<dbReference type="EMBL" id="AJ010462">
    <property type="protein sequence ID" value="CAA09201.1"/>
    <property type="molecule type" value="mRNA"/>
</dbReference>
<dbReference type="PIR" id="T51342">
    <property type="entry name" value="T51342"/>
</dbReference>
<dbReference type="RefSeq" id="NP_568931.1">
    <property type="nucleotide sequence ID" value="NM_125492.5"/>
</dbReference>
<dbReference type="SMR" id="Q8GY84"/>
<dbReference type="FunCoup" id="Q8GY84">
    <property type="interactions" value="4432"/>
</dbReference>
<dbReference type="STRING" id="3702.Q8GY84"/>
<dbReference type="iPTMnet" id="Q8GY84"/>
<dbReference type="PaxDb" id="3702-AT5G60990.1"/>
<dbReference type="ProteomicsDB" id="236906"/>
<dbReference type="EnsemblPlants" id="AT5G60990.1">
    <property type="protein sequence ID" value="AT5G60990.1"/>
    <property type="gene ID" value="AT5G60990"/>
</dbReference>
<dbReference type="GeneID" id="836220"/>
<dbReference type="Gramene" id="AT5G60990.1">
    <property type="protein sequence ID" value="AT5G60990.1"/>
    <property type="gene ID" value="AT5G60990"/>
</dbReference>
<dbReference type="KEGG" id="ath:AT5G60990"/>
<dbReference type="Araport" id="AT5G60990"/>
<dbReference type="TAIR" id="AT5G60990">
    <property type="gene designation" value="RH10"/>
</dbReference>
<dbReference type="eggNOG" id="KOG0330">
    <property type="taxonomic scope" value="Eukaryota"/>
</dbReference>
<dbReference type="HOGENOM" id="CLU_003041_1_1_1"/>
<dbReference type="InParanoid" id="Q8GY84"/>
<dbReference type="OMA" id="GIGIKCC"/>
<dbReference type="PhylomeDB" id="Q8GY84"/>
<dbReference type="CD-CODE" id="4299E36E">
    <property type="entry name" value="Nucleolus"/>
</dbReference>
<dbReference type="PRO" id="PR:Q8GY84"/>
<dbReference type="Proteomes" id="UP000006548">
    <property type="component" value="Chromosome 5"/>
</dbReference>
<dbReference type="ExpressionAtlas" id="Q8GY84">
    <property type="expression patterns" value="baseline and differential"/>
</dbReference>
<dbReference type="GO" id="GO:0005730">
    <property type="term" value="C:nucleolus"/>
    <property type="evidence" value="ECO:0007669"/>
    <property type="project" value="UniProtKB-SubCell"/>
</dbReference>
<dbReference type="GO" id="GO:0005524">
    <property type="term" value="F:ATP binding"/>
    <property type="evidence" value="ECO:0007669"/>
    <property type="project" value="UniProtKB-KW"/>
</dbReference>
<dbReference type="GO" id="GO:0016887">
    <property type="term" value="F:ATP hydrolysis activity"/>
    <property type="evidence" value="ECO:0007669"/>
    <property type="project" value="RHEA"/>
</dbReference>
<dbReference type="GO" id="GO:0003723">
    <property type="term" value="F:RNA binding"/>
    <property type="evidence" value="ECO:0007669"/>
    <property type="project" value="UniProtKB-KW"/>
</dbReference>
<dbReference type="GO" id="GO:0003724">
    <property type="term" value="F:RNA helicase activity"/>
    <property type="evidence" value="ECO:0007669"/>
    <property type="project" value="UniProtKB-EC"/>
</dbReference>
<dbReference type="GO" id="GO:0006364">
    <property type="term" value="P:rRNA processing"/>
    <property type="evidence" value="ECO:0007669"/>
    <property type="project" value="UniProtKB-KW"/>
</dbReference>
<dbReference type="CDD" id="cd17954">
    <property type="entry name" value="DEADc_DDX47"/>
    <property type="match status" value="1"/>
</dbReference>
<dbReference type="CDD" id="cd18787">
    <property type="entry name" value="SF2_C_DEAD"/>
    <property type="match status" value="1"/>
</dbReference>
<dbReference type="Gene3D" id="3.40.50.300">
    <property type="entry name" value="P-loop containing nucleotide triphosphate hydrolases"/>
    <property type="match status" value="2"/>
</dbReference>
<dbReference type="InterPro" id="IPR044765">
    <property type="entry name" value="DDX47/Rrp3_DEADc"/>
</dbReference>
<dbReference type="InterPro" id="IPR011545">
    <property type="entry name" value="DEAD/DEAH_box_helicase_dom"/>
</dbReference>
<dbReference type="InterPro" id="IPR050079">
    <property type="entry name" value="DEAD_box_RNA_helicase"/>
</dbReference>
<dbReference type="InterPro" id="IPR014001">
    <property type="entry name" value="Helicase_ATP-bd"/>
</dbReference>
<dbReference type="InterPro" id="IPR001650">
    <property type="entry name" value="Helicase_C-like"/>
</dbReference>
<dbReference type="InterPro" id="IPR027417">
    <property type="entry name" value="P-loop_NTPase"/>
</dbReference>
<dbReference type="InterPro" id="IPR000629">
    <property type="entry name" value="RNA-helicase_DEAD-box_CS"/>
</dbReference>
<dbReference type="InterPro" id="IPR014014">
    <property type="entry name" value="RNA_helicase_DEAD_Q_motif"/>
</dbReference>
<dbReference type="PANTHER" id="PTHR47959:SF24">
    <property type="entry name" value="ATP-DEPENDENT RNA HELICASE"/>
    <property type="match status" value="1"/>
</dbReference>
<dbReference type="PANTHER" id="PTHR47959">
    <property type="entry name" value="ATP-DEPENDENT RNA HELICASE RHLE-RELATED"/>
    <property type="match status" value="1"/>
</dbReference>
<dbReference type="Pfam" id="PF00270">
    <property type="entry name" value="DEAD"/>
    <property type="match status" value="1"/>
</dbReference>
<dbReference type="Pfam" id="PF00271">
    <property type="entry name" value="Helicase_C"/>
    <property type="match status" value="1"/>
</dbReference>
<dbReference type="SMART" id="SM00487">
    <property type="entry name" value="DEXDc"/>
    <property type="match status" value="1"/>
</dbReference>
<dbReference type="SMART" id="SM00490">
    <property type="entry name" value="HELICc"/>
    <property type="match status" value="1"/>
</dbReference>
<dbReference type="SUPFAM" id="SSF52540">
    <property type="entry name" value="P-loop containing nucleoside triphosphate hydrolases"/>
    <property type="match status" value="1"/>
</dbReference>
<dbReference type="PROSITE" id="PS00039">
    <property type="entry name" value="DEAD_ATP_HELICASE"/>
    <property type="match status" value="1"/>
</dbReference>
<dbReference type="PROSITE" id="PS51192">
    <property type="entry name" value="HELICASE_ATP_BIND_1"/>
    <property type="match status" value="1"/>
</dbReference>
<dbReference type="PROSITE" id="PS51194">
    <property type="entry name" value="HELICASE_CTER"/>
    <property type="match status" value="1"/>
</dbReference>
<dbReference type="PROSITE" id="PS51195">
    <property type="entry name" value="Q_MOTIF"/>
    <property type="match status" value="1"/>
</dbReference>
<protein>
    <recommendedName>
        <fullName>DEAD-box ATP-dependent RNA helicase 10</fullName>
        <ecNumber evidence="1">3.6.4.13</ecNumber>
    </recommendedName>
    <alternativeName>
        <fullName evidence="6">Protein ENHANCER OF ASYMMETRIC LEAVES TWO</fullName>
    </alternativeName>
</protein>
<accession>Q8GY84</accession>
<accession>Q8LA24</accession>
<accession>Q9FME1</accession>
<accession>Q9ZS10</accession>
<sequence length="456" mass="51147">MEEENEVVKTFAELGVREELVKACERLGWKNPSKIQAEALPFALEGKDVIGLAQTGSGKTGAFAIPILQALLEYVYDSEPKKGRRPDPAFFACVLSPTRELAIQIAEQFEALGADISLRCAVLVGGIDRMQQTIALGKRPHVIVATPGRLWDHMSDTKGFSLKSLKYLVLDEADRLLNEDFEKSLNQILEEIPLERKTFLFSATMTKKVRKLQRACLRNPVKIEAASKYSTVDTLKQQYRFVAAKYKDCYLVYILSEMPESTSMIFTRTCDGTRFLALVLRSLGFRAIPISGQMTQSKRLGALNKFKAGECNILVCTDVASRGLDIPSVDVVINYDIPTNSKDYIHRVGRTARAGRSGVGISLVNQYELEWYIQIEKLIGKKLPEYPAEEDEVLSLLERVAEAKKLSAMNMKESGGRKRRGEDDEESERFLGGNKDRGNKERGGNKDKKSSKKFKR</sequence>
<comment type="function">
    <text evidence="5">Involved in leaf polarity establishment by functioning cooperatively with AS2 to repress abaxial genes ARF3, ARF4, KAN1, KAN2, YAB1 and YAB5, and the knox homeobox genes KNAT1, KNAT2, KNAT6, and STM to promote adaxial development in leaf primordia at shoot apical meristems at high temperatures. Involved in the processing of pre-rRNA intermediates at high temperatures.</text>
</comment>
<comment type="catalytic activity">
    <reaction evidence="1">
        <text>ATP + H2O = ADP + phosphate + H(+)</text>
        <dbReference type="Rhea" id="RHEA:13065"/>
        <dbReference type="ChEBI" id="CHEBI:15377"/>
        <dbReference type="ChEBI" id="CHEBI:15378"/>
        <dbReference type="ChEBI" id="CHEBI:30616"/>
        <dbReference type="ChEBI" id="CHEBI:43474"/>
        <dbReference type="ChEBI" id="CHEBI:456216"/>
        <dbReference type="EC" id="3.6.4.13"/>
    </reaction>
</comment>
<comment type="subcellular location">
    <subcellularLocation>
        <location evidence="5">Nucleus</location>
    </subcellularLocation>
    <subcellularLocation>
        <location evidence="5">Nucleus</location>
        <location evidence="5">Nucleolus</location>
    </subcellularLocation>
</comment>
<comment type="tissue specificity">
    <text evidence="5">Expressed in all tissues and organs examined including root, cotyledon, first and second leaves, third and fourth leaves, fifth and sixth leaves, shoot apex, flower, flower bud, cauline leaf and rosette leaves.</text>
</comment>
<comment type="domain">
    <text>The Q motif is unique to and characteristic of the DEAD box family of RNA helicases and controls ATP binding and hydrolysis.</text>
</comment>
<comment type="disruption phenotype">
    <text evidence="5">Plants are indistinguishable from that of wild-type at 16 degrees Celsius, however they generate a weak phenotype of pointed leaves at 22 degrees Celsius which become narrower at 26 degrees Celsius. In the leaves of plants grown at 26 degrees Celsius, the xylems are located on the adaxial sides and the phloems are on the abaxial sides, similar to those in the wild type. Plants with double mutations in this protein and in AS2 or AS1 protein have abaxialized filamentous and trumpet-like leaves with loss of the adaxial domain at high temperatures. In double mutants, shapes of epidermal cells of the filamentous leaves are simple and rectangular, similar to those of a petiole, but different from those of flat leaves of wild-type plants. The filamentous leaves of the double mutant at 26 degrees Celsius show primitive or no vascular tissue without apparent xylem cells inside the bundle sheath, suggesting defects in differentiation of xylem cells on the adaxial side.</text>
</comment>
<comment type="similarity">
    <text evidence="7">Belongs to the DEAD box helicase family. DDX47/RRP3 subfamily.</text>
</comment>
<gene>
    <name type="primary">RH10</name>
    <name type="synonym">EAST2</name>
    <name type="ordered locus">At5g60990</name>
    <name type="ORF">MSL3.13</name>
    <name type="ORF">MSL3_110</name>
</gene>
<name>RH10_ARATH</name>
<keyword id="KW-0067">ATP-binding</keyword>
<keyword id="KW-0347">Helicase</keyword>
<keyword id="KW-0378">Hydrolase</keyword>
<keyword id="KW-0547">Nucleotide-binding</keyword>
<keyword id="KW-0539">Nucleus</keyword>
<keyword id="KW-1185">Reference proteome</keyword>
<keyword id="KW-0678">Repressor</keyword>
<keyword id="KW-0694">RNA-binding</keyword>
<keyword id="KW-0698">rRNA processing</keyword>
<keyword id="KW-0346">Stress response</keyword>
<proteinExistence type="evidence at protein level"/>
<evidence type="ECO:0000250" key="1">
    <source>
        <dbReference type="UniProtKB" id="A2XKG2"/>
    </source>
</evidence>
<evidence type="ECO:0000255" key="2">
    <source>
        <dbReference type="PROSITE-ProRule" id="PRU00541"/>
    </source>
</evidence>
<evidence type="ECO:0000255" key="3">
    <source>
        <dbReference type="PROSITE-ProRule" id="PRU00542"/>
    </source>
</evidence>
<evidence type="ECO:0000256" key="4">
    <source>
        <dbReference type="SAM" id="MobiDB-lite"/>
    </source>
</evidence>
<evidence type="ECO:0000269" key="5">
    <source>
    </source>
</evidence>
<evidence type="ECO:0000303" key="6">
    <source>
    </source>
</evidence>
<evidence type="ECO:0000305" key="7"/>